<gene>
    <name evidence="1" type="primary">rho</name>
    <name type="ordered locus">RC0759</name>
</gene>
<feature type="chain" id="PRO_0000286651" description="Transcription termination factor Rho">
    <location>
        <begin position="1"/>
        <end position="458"/>
    </location>
</feature>
<feature type="domain" description="Rho RNA-BD" evidence="2">
    <location>
        <begin position="78"/>
        <end position="153"/>
    </location>
</feature>
<feature type="region of interest" description="Disordered" evidence="3">
    <location>
        <begin position="1"/>
        <end position="23"/>
    </location>
</feature>
<feature type="compositionally biased region" description="Low complexity" evidence="3">
    <location>
        <begin position="10"/>
        <end position="23"/>
    </location>
</feature>
<feature type="binding site" evidence="1">
    <location>
        <begin position="201"/>
        <end position="206"/>
    </location>
    <ligand>
        <name>ATP</name>
        <dbReference type="ChEBI" id="CHEBI:30616"/>
    </ligand>
</feature>
<feature type="binding site" evidence="1">
    <location>
        <begin position="213"/>
        <end position="218"/>
    </location>
    <ligand>
        <name>ATP</name>
        <dbReference type="ChEBI" id="CHEBI:30616"/>
    </ligand>
</feature>
<feature type="binding site" evidence="1">
    <location>
        <position position="244"/>
    </location>
    <ligand>
        <name>ATP</name>
        <dbReference type="ChEBI" id="CHEBI:30616"/>
    </ligand>
</feature>
<reference key="1">
    <citation type="journal article" date="2001" name="Science">
        <title>Mechanisms of evolution in Rickettsia conorii and R. prowazekii.</title>
        <authorList>
            <person name="Ogata H."/>
            <person name="Audic S."/>
            <person name="Renesto-Audiffren P."/>
            <person name="Fournier P.-E."/>
            <person name="Barbe V."/>
            <person name="Samson D."/>
            <person name="Roux V."/>
            <person name="Cossart P."/>
            <person name="Weissenbach J."/>
            <person name="Claverie J.-M."/>
            <person name="Raoult D."/>
        </authorList>
    </citation>
    <scope>NUCLEOTIDE SEQUENCE [LARGE SCALE GENOMIC DNA]</scope>
    <source>
        <strain>ATCC VR-613 / Malish 7</strain>
    </source>
</reference>
<evidence type="ECO:0000255" key="1">
    <source>
        <dbReference type="HAMAP-Rule" id="MF_01884"/>
    </source>
</evidence>
<evidence type="ECO:0000255" key="2">
    <source>
        <dbReference type="PROSITE-ProRule" id="PRU01203"/>
    </source>
</evidence>
<evidence type="ECO:0000256" key="3">
    <source>
        <dbReference type="SAM" id="MobiDB-lite"/>
    </source>
</evidence>
<keyword id="KW-0067">ATP-binding</keyword>
<keyword id="KW-0347">Helicase</keyword>
<keyword id="KW-0378">Hydrolase</keyword>
<keyword id="KW-0547">Nucleotide-binding</keyword>
<keyword id="KW-0694">RNA-binding</keyword>
<keyword id="KW-0804">Transcription</keyword>
<keyword id="KW-0805">Transcription regulation</keyword>
<keyword id="KW-0806">Transcription termination</keyword>
<proteinExistence type="inferred from homology"/>
<name>RHO_RICCN</name>
<accession>Q92HL2</accession>
<dbReference type="EC" id="3.6.4.-" evidence="1"/>
<dbReference type="EMBL" id="AE006914">
    <property type="protein sequence ID" value="AAL03297.1"/>
    <property type="molecule type" value="Genomic_DNA"/>
</dbReference>
<dbReference type="PIR" id="G97794">
    <property type="entry name" value="G97794"/>
</dbReference>
<dbReference type="RefSeq" id="WP_004998383.1">
    <property type="nucleotide sequence ID" value="NC_003103.1"/>
</dbReference>
<dbReference type="SMR" id="Q92HL2"/>
<dbReference type="GeneID" id="95361271"/>
<dbReference type="KEGG" id="rco:RC0759"/>
<dbReference type="HOGENOM" id="CLU_016377_4_3_5"/>
<dbReference type="Proteomes" id="UP000000816">
    <property type="component" value="Chromosome"/>
</dbReference>
<dbReference type="GO" id="GO:0005829">
    <property type="term" value="C:cytosol"/>
    <property type="evidence" value="ECO:0007669"/>
    <property type="project" value="UniProtKB-ARBA"/>
</dbReference>
<dbReference type="GO" id="GO:0005524">
    <property type="term" value="F:ATP binding"/>
    <property type="evidence" value="ECO:0007669"/>
    <property type="project" value="UniProtKB-UniRule"/>
</dbReference>
<dbReference type="GO" id="GO:0016887">
    <property type="term" value="F:ATP hydrolysis activity"/>
    <property type="evidence" value="ECO:0007669"/>
    <property type="project" value="InterPro"/>
</dbReference>
<dbReference type="GO" id="GO:0008186">
    <property type="term" value="F:ATP-dependent activity, acting on RNA"/>
    <property type="evidence" value="ECO:0007669"/>
    <property type="project" value="InterPro"/>
</dbReference>
<dbReference type="GO" id="GO:0004386">
    <property type="term" value="F:helicase activity"/>
    <property type="evidence" value="ECO:0007669"/>
    <property type="project" value="UniProtKB-UniRule"/>
</dbReference>
<dbReference type="GO" id="GO:0003723">
    <property type="term" value="F:RNA binding"/>
    <property type="evidence" value="ECO:0007669"/>
    <property type="project" value="UniProtKB-UniRule"/>
</dbReference>
<dbReference type="GO" id="GO:0006353">
    <property type="term" value="P:DNA-templated transcription termination"/>
    <property type="evidence" value="ECO:0007669"/>
    <property type="project" value="UniProtKB-UniRule"/>
</dbReference>
<dbReference type="CDD" id="cd04459">
    <property type="entry name" value="Rho_CSD"/>
    <property type="match status" value="1"/>
</dbReference>
<dbReference type="CDD" id="cd01128">
    <property type="entry name" value="rho_factor_C"/>
    <property type="match status" value="1"/>
</dbReference>
<dbReference type="FunFam" id="3.40.50.300:FF:000072">
    <property type="entry name" value="Transcription termination factor Rho"/>
    <property type="match status" value="1"/>
</dbReference>
<dbReference type="Gene3D" id="2.40.50.140">
    <property type="entry name" value="Nucleic acid-binding proteins"/>
    <property type="match status" value="1"/>
</dbReference>
<dbReference type="Gene3D" id="3.40.50.300">
    <property type="entry name" value="P-loop containing nucleotide triphosphate hydrolases"/>
    <property type="match status" value="1"/>
</dbReference>
<dbReference type="HAMAP" id="MF_01884">
    <property type="entry name" value="Rho"/>
    <property type="match status" value="1"/>
</dbReference>
<dbReference type="InterPro" id="IPR003593">
    <property type="entry name" value="AAA+_ATPase"/>
</dbReference>
<dbReference type="InterPro" id="IPR000194">
    <property type="entry name" value="ATPase_F1/V1/A1_a/bsu_nucl-bd"/>
</dbReference>
<dbReference type="InterPro" id="IPR011129">
    <property type="entry name" value="CSD"/>
</dbReference>
<dbReference type="InterPro" id="IPR012340">
    <property type="entry name" value="NA-bd_OB-fold"/>
</dbReference>
<dbReference type="InterPro" id="IPR027417">
    <property type="entry name" value="P-loop_NTPase"/>
</dbReference>
<dbReference type="InterPro" id="IPR011112">
    <property type="entry name" value="Rho-like_N"/>
</dbReference>
<dbReference type="InterPro" id="IPR041703">
    <property type="entry name" value="Rho_factor_ATP-bd"/>
</dbReference>
<dbReference type="InterPro" id="IPR036269">
    <property type="entry name" value="Rho_N_sf"/>
</dbReference>
<dbReference type="InterPro" id="IPR011113">
    <property type="entry name" value="Rho_RNA-bd"/>
</dbReference>
<dbReference type="InterPro" id="IPR004665">
    <property type="entry name" value="Term_rho"/>
</dbReference>
<dbReference type="NCBIfam" id="NF006886">
    <property type="entry name" value="PRK09376.1"/>
    <property type="match status" value="1"/>
</dbReference>
<dbReference type="NCBIfam" id="TIGR00767">
    <property type="entry name" value="rho"/>
    <property type="match status" value="1"/>
</dbReference>
<dbReference type="PANTHER" id="PTHR46425">
    <property type="entry name" value="TRANSCRIPTION TERMINATION FACTOR RHO"/>
    <property type="match status" value="1"/>
</dbReference>
<dbReference type="PANTHER" id="PTHR46425:SF1">
    <property type="entry name" value="TRANSCRIPTION TERMINATION FACTOR RHO"/>
    <property type="match status" value="1"/>
</dbReference>
<dbReference type="Pfam" id="PF00006">
    <property type="entry name" value="ATP-synt_ab"/>
    <property type="match status" value="1"/>
</dbReference>
<dbReference type="Pfam" id="PF07498">
    <property type="entry name" value="Rho_N"/>
    <property type="match status" value="1"/>
</dbReference>
<dbReference type="Pfam" id="PF07497">
    <property type="entry name" value="Rho_RNA_bind"/>
    <property type="match status" value="1"/>
</dbReference>
<dbReference type="SMART" id="SM00382">
    <property type="entry name" value="AAA"/>
    <property type="match status" value="1"/>
</dbReference>
<dbReference type="SMART" id="SM00357">
    <property type="entry name" value="CSP"/>
    <property type="match status" value="1"/>
</dbReference>
<dbReference type="SMART" id="SM00959">
    <property type="entry name" value="Rho_N"/>
    <property type="match status" value="1"/>
</dbReference>
<dbReference type="SUPFAM" id="SSF50249">
    <property type="entry name" value="Nucleic acid-binding proteins"/>
    <property type="match status" value="1"/>
</dbReference>
<dbReference type="SUPFAM" id="SSF52540">
    <property type="entry name" value="P-loop containing nucleoside triphosphate hydrolases"/>
    <property type="match status" value="1"/>
</dbReference>
<dbReference type="SUPFAM" id="SSF68912">
    <property type="entry name" value="Rho N-terminal domain-like"/>
    <property type="match status" value="1"/>
</dbReference>
<dbReference type="PROSITE" id="PS51856">
    <property type="entry name" value="RHO_RNA_BD"/>
    <property type="match status" value="1"/>
</dbReference>
<sequence>MNTTNKESTAELNNTESNNNYNNFAENGNIINLKQLKRKLPEELQAQAEELKIENINSLLKQELVFAILKKSVEQGVLIVGEGVLEVLPDGFGFLRSPEVNYLAGPDDIYISPSQIRRFGLRTGDTVEGQIRAPKAGERYFALLKVNRVNFEDPSKAYHRVHFDNLTPLYPDEKLGLELENNSKDSKDFSTRVIELVAPMGKGQRALIVAPPRTGKTVLLQNIAHAITTNNPEVFLIVLLIDERPEEVTDMQRSVRGEVVSSTFDEPASRHVQLAEMVIKKAKRLVEHKKDVVILVDAITRLARAYNTVVPSSGKVLTGGVDANALQRPKRFFGAARNIENGGSLTIIGTALIETGSRMDEVIFEEFKGTGNSEIVLDRKIADKRIYPAIDITRSGTRKEDLLVDKIILNKMWVLRRIIDPMGSSEAIEFLLKKLENTKTNGEFFEMMKSPERPKNGL</sequence>
<protein>
    <recommendedName>
        <fullName evidence="1">Transcription termination factor Rho</fullName>
        <ecNumber evidence="1">3.6.4.-</ecNumber>
    </recommendedName>
    <alternativeName>
        <fullName evidence="1">ATP-dependent helicase Rho</fullName>
    </alternativeName>
</protein>
<comment type="function">
    <text evidence="1">Facilitates transcription termination by a mechanism that involves Rho binding to the nascent RNA, activation of Rho's RNA-dependent ATPase activity, and release of the mRNA from the DNA template.</text>
</comment>
<comment type="subunit">
    <text evidence="1">Homohexamer. The homohexamer assembles into an open ring structure.</text>
</comment>
<comment type="similarity">
    <text evidence="1">Belongs to the Rho family.</text>
</comment>
<organism>
    <name type="scientific">Rickettsia conorii (strain ATCC VR-613 / Malish 7)</name>
    <dbReference type="NCBI Taxonomy" id="272944"/>
    <lineage>
        <taxon>Bacteria</taxon>
        <taxon>Pseudomonadati</taxon>
        <taxon>Pseudomonadota</taxon>
        <taxon>Alphaproteobacteria</taxon>
        <taxon>Rickettsiales</taxon>
        <taxon>Rickettsiaceae</taxon>
        <taxon>Rickettsieae</taxon>
        <taxon>Rickettsia</taxon>
        <taxon>spotted fever group</taxon>
    </lineage>
</organism>